<proteinExistence type="inferred from homology"/>
<reference key="1">
    <citation type="journal article" date="2006" name="Proc. Natl. Acad. Sci. U.S.A.">
        <title>Comparative genomics of the lactic acid bacteria.</title>
        <authorList>
            <person name="Makarova K.S."/>
            <person name="Slesarev A."/>
            <person name="Wolf Y.I."/>
            <person name="Sorokin A."/>
            <person name="Mirkin B."/>
            <person name="Koonin E.V."/>
            <person name="Pavlov A."/>
            <person name="Pavlova N."/>
            <person name="Karamychev V."/>
            <person name="Polouchine N."/>
            <person name="Shakhova V."/>
            <person name="Grigoriev I."/>
            <person name="Lou Y."/>
            <person name="Rohksar D."/>
            <person name="Lucas S."/>
            <person name="Huang K."/>
            <person name="Goodstein D.M."/>
            <person name="Hawkins T."/>
            <person name="Plengvidhya V."/>
            <person name="Welker D."/>
            <person name="Hughes J."/>
            <person name="Goh Y."/>
            <person name="Benson A."/>
            <person name="Baldwin K."/>
            <person name="Lee J.-H."/>
            <person name="Diaz-Muniz I."/>
            <person name="Dosti B."/>
            <person name="Smeianov V."/>
            <person name="Wechter W."/>
            <person name="Barabote R."/>
            <person name="Lorca G."/>
            <person name="Altermann E."/>
            <person name="Barrangou R."/>
            <person name="Ganesan B."/>
            <person name="Xie Y."/>
            <person name="Rawsthorne H."/>
            <person name="Tamir D."/>
            <person name="Parker C."/>
            <person name="Breidt F."/>
            <person name="Broadbent J.R."/>
            <person name="Hutkins R."/>
            <person name="O'Sullivan D."/>
            <person name="Steele J."/>
            <person name="Unlu G."/>
            <person name="Saier M.H. Jr."/>
            <person name="Klaenhammer T."/>
            <person name="Richardson P."/>
            <person name="Kozyavkin S."/>
            <person name="Weimer B.C."/>
            <person name="Mills D.A."/>
        </authorList>
    </citation>
    <scope>NUCLEOTIDE SEQUENCE [LARGE SCALE GENOMIC DNA]</scope>
    <source>
        <strain>ATCC BAA-365 / Lb-18</strain>
    </source>
</reference>
<comment type="function">
    <text evidence="1">Binds to the 23S rRNA.</text>
</comment>
<comment type="subunit">
    <text evidence="1">Part of the 50S ribosomal subunit.</text>
</comment>
<comment type="similarity">
    <text evidence="1">Belongs to the universal ribosomal protein uL15 family.</text>
</comment>
<sequence length="146" mass="15634">MKLNELHPSEGSRHARKRVGRGTSSGFGKTSGRGQKGQHARSGGNTRLGFEGGQMPLFRTMPKRGFKNINRKEYAIVNLADLNKFEEGSVVDFEALKAKGLVKKQLSGVKVLGNGDLNVKLTVKVNKVSEAAKSAIEAAGGTVEVI</sequence>
<evidence type="ECO:0000255" key="1">
    <source>
        <dbReference type="HAMAP-Rule" id="MF_01341"/>
    </source>
</evidence>
<evidence type="ECO:0000256" key="2">
    <source>
        <dbReference type="SAM" id="MobiDB-lite"/>
    </source>
</evidence>
<evidence type="ECO:0000305" key="3"/>
<gene>
    <name evidence="1" type="primary">rplO</name>
    <name type="ordered locus">LBUL_0369</name>
</gene>
<organism>
    <name type="scientific">Lactobacillus delbrueckii subsp. bulgaricus (strain ATCC BAA-365 / Lb-18)</name>
    <dbReference type="NCBI Taxonomy" id="321956"/>
    <lineage>
        <taxon>Bacteria</taxon>
        <taxon>Bacillati</taxon>
        <taxon>Bacillota</taxon>
        <taxon>Bacilli</taxon>
        <taxon>Lactobacillales</taxon>
        <taxon>Lactobacillaceae</taxon>
        <taxon>Lactobacillus</taxon>
    </lineage>
</organism>
<dbReference type="EMBL" id="CP000412">
    <property type="protein sequence ID" value="ABJ58026.1"/>
    <property type="molecule type" value="Genomic_DNA"/>
</dbReference>
<dbReference type="RefSeq" id="WP_002878182.1">
    <property type="nucleotide sequence ID" value="NC_008529.1"/>
</dbReference>
<dbReference type="SMR" id="Q04BZ6"/>
<dbReference type="GeneID" id="69668445"/>
<dbReference type="KEGG" id="lbu:LBUL_0369"/>
<dbReference type="HOGENOM" id="CLU_055188_4_2_9"/>
<dbReference type="BioCyc" id="LDEL321956:LBUL_RS01725-MONOMER"/>
<dbReference type="GO" id="GO:0022625">
    <property type="term" value="C:cytosolic large ribosomal subunit"/>
    <property type="evidence" value="ECO:0007669"/>
    <property type="project" value="TreeGrafter"/>
</dbReference>
<dbReference type="GO" id="GO:0019843">
    <property type="term" value="F:rRNA binding"/>
    <property type="evidence" value="ECO:0007669"/>
    <property type="project" value="UniProtKB-UniRule"/>
</dbReference>
<dbReference type="GO" id="GO:0003735">
    <property type="term" value="F:structural constituent of ribosome"/>
    <property type="evidence" value="ECO:0007669"/>
    <property type="project" value="InterPro"/>
</dbReference>
<dbReference type="GO" id="GO:0006412">
    <property type="term" value="P:translation"/>
    <property type="evidence" value="ECO:0007669"/>
    <property type="project" value="UniProtKB-UniRule"/>
</dbReference>
<dbReference type="Gene3D" id="3.100.10.10">
    <property type="match status" value="1"/>
</dbReference>
<dbReference type="HAMAP" id="MF_01341">
    <property type="entry name" value="Ribosomal_uL15"/>
    <property type="match status" value="1"/>
</dbReference>
<dbReference type="InterPro" id="IPR030878">
    <property type="entry name" value="Ribosomal_uL15"/>
</dbReference>
<dbReference type="InterPro" id="IPR021131">
    <property type="entry name" value="Ribosomal_uL15/eL18"/>
</dbReference>
<dbReference type="InterPro" id="IPR036227">
    <property type="entry name" value="Ribosomal_uL15/eL18_sf"/>
</dbReference>
<dbReference type="InterPro" id="IPR005749">
    <property type="entry name" value="Ribosomal_uL15_bac-type"/>
</dbReference>
<dbReference type="InterPro" id="IPR001196">
    <property type="entry name" value="Ribosomal_uL15_CS"/>
</dbReference>
<dbReference type="NCBIfam" id="TIGR01071">
    <property type="entry name" value="rplO_bact"/>
    <property type="match status" value="1"/>
</dbReference>
<dbReference type="PANTHER" id="PTHR12934">
    <property type="entry name" value="50S RIBOSOMAL PROTEIN L15"/>
    <property type="match status" value="1"/>
</dbReference>
<dbReference type="PANTHER" id="PTHR12934:SF11">
    <property type="entry name" value="LARGE RIBOSOMAL SUBUNIT PROTEIN UL15M"/>
    <property type="match status" value="1"/>
</dbReference>
<dbReference type="Pfam" id="PF00828">
    <property type="entry name" value="Ribosomal_L27A"/>
    <property type="match status" value="1"/>
</dbReference>
<dbReference type="SUPFAM" id="SSF52080">
    <property type="entry name" value="Ribosomal proteins L15p and L18e"/>
    <property type="match status" value="1"/>
</dbReference>
<dbReference type="PROSITE" id="PS00475">
    <property type="entry name" value="RIBOSOMAL_L15"/>
    <property type="match status" value="1"/>
</dbReference>
<name>RL15_LACDB</name>
<accession>Q04BZ6</accession>
<keyword id="KW-0687">Ribonucleoprotein</keyword>
<keyword id="KW-0689">Ribosomal protein</keyword>
<keyword id="KW-0694">RNA-binding</keyword>
<keyword id="KW-0699">rRNA-binding</keyword>
<feature type="chain" id="PRO_1000054479" description="Large ribosomal subunit protein uL15">
    <location>
        <begin position="1"/>
        <end position="146"/>
    </location>
</feature>
<feature type="region of interest" description="Disordered" evidence="2">
    <location>
        <begin position="1"/>
        <end position="56"/>
    </location>
</feature>
<feature type="compositionally biased region" description="Basic and acidic residues" evidence="2">
    <location>
        <begin position="1"/>
        <end position="13"/>
    </location>
</feature>
<feature type="compositionally biased region" description="Gly residues" evidence="2">
    <location>
        <begin position="23"/>
        <end position="35"/>
    </location>
</feature>
<protein>
    <recommendedName>
        <fullName evidence="1">Large ribosomal subunit protein uL15</fullName>
    </recommendedName>
    <alternativeName>
        <fullName evidence="3">50S ribosomal protein L15</fullName>
    </alternativeName>
</protein>